<proteinExistence type="evidence at protein level"/>
<sequence>MPVVMARDLEETASSSEDEDLANQEDHPCIMWTGGCRRIPVLVFHAEAILTKDNNIRVIGERYHLSYKIVRTDSRLVRSILTAHGFHEVHPSSTDYNLMWTGSHLKPFLLRTLSEAQKVNHFPRSYELTRKDRLYKNIIRMQHTHGFKAFHILPQTFLLPAEYAEFCNSYSKDRGPWIVKPVASSRGRGVYLINNPNQISLEENILVSRYINNPLLIDDFKFDVRLYVLVTSYDPLVIYLYEEGLARFATVRYDQGSKNIRNQFMHLTNYSVNKKSGDYVSCDDPEVEDYGNKWSMSAMLRYLKQEGKDTTALMAHVEDLIIKTIISAELAIATACKTFVPHRSSCFELYGFDVLIDNTLKPWLLEVNLSPSLACDAPLDLKIKASMISDMFTVVGFVCQDPAQRTSNRSIYPSFESSRRNPFQKPQRTRPLSASDAEMKNLVASAREKVPGKLGGSVLGLSMEEIKVLRRVKEENDRRGGFIRIFPTSETWEIYGSYLEHKTSMNYMLATRLFQDRGNPRRSLLTGRARVSTEGAPELKVESMNSKAKLHAALYERKLLSLEVRKRRRRSGRLRAMRPKYPVIAQPAEMNIKTETESEEEEEVGLDNDDEEQEASQEESAGSLGENQAKYTPSLTVIVENSPRDNAMKVAEWTNKGEPCCKIEAQEPESKFNLMQILQDNGNLSKVQARLAFSAYLQHVQIRLTKDSGGQTLSPSWAAKEDEQMELVVRFLKRASSNLQHSLRMVLPSRRLALLERRRILAHQLGDFIGVYNKETEQMAEKKSKKKLEEEEEDGVNAESFQEFIRQASEAELEEVLTFYTQKNKSASVFLGTHSKSSKNSSSYSDSGAKGDHPETIQEVKIKQPKQQQATEIHADKLSRFTTSSGKEAKLVYTNCSSFCSPAAVLLQRLPSSHLSSVITTSALSAGPGHHASLSQIPPAVPSLPHQPALLLSPVPDNAPPSIHSGTQNVSPAGLPRCRSGSYTIGPFSSFQSAAHIYSQKLSRPSSAKAAGSCHPHKHHSGIAKTQKEGEDVSLNRRYNQSLVTAELQRLAEKQAARQYSPASHISLLTQQVTNLNLASSVINRSSASTPPTLRPVISPSGPTWSIQPDLHASETHSSPPGSRSLQTGGFAWEGEVENNAYSKTTGVVPQHKYHPTAGSYQLHFALQQLEQQKLQSRQLLDQSRARHQAIFGSQTLPNSSLWTMNNGPGCRISSATTGGQKPNTLPQKVVAPPNSSTLVSKPASNHKQVLRKPASQRASKGSSAEGQLNGLQSSLNPAAFMPITNSTGSLEAPQVIFARSKPLPTQSGALATVIGQRKSKSVKSGTI</sequence>
<evidence type="ECO:0000250" key="1"/>
<evidence type="ECO:0000250" key="2">
    <source>
        <dbReference type="UniProtKB" id="A4Q9E8"/>
    </source>
</evidence>
<evidence type="ECO:0000250" key="3">
    <source>
        <dbReference type="UniProtKB" id="Q6EMB2"/>
    </source>
</evidence>
<evidence type="ECO:0000250" key="4">
    <source>
        <dbReference type="UniProtKB" id="Q6ZT98"/>
    </source>
</evidence>
<evidence type="ECO:0000255" key="5">
    <source>
        <dbReference type="PROSITE-ProRule" id="PRU00568"/>
    </source>
</evidence>
<evidence type="ECO:0000256" key="6">
    <source>
        <dbReference type="SAM" id="MobiDB-lite"/>
    </source>
</evidence>
<evidence type="ECO:0000269" key="7">
    <source>
    </source>
</evidence>
<evidence type="ECO:0000303" key="8">
    <source>
    </source>
</evidence>
<evidence type="ECO:0000303" key="9">
    <source>
    </source>
</evidence>
<evidence type="ECO:0000305" key="10"/>
<evidence type="ECO:0000305" key="11">
    <source>
    </source>
</evidence>
<evidence type="ECO:0000312" key="12">
    <source>
        <dbReference type="MGI" id="MGI:2443657"/>
    </source>
</evidence>
<keyword id="KW-0025">Alternative splicing</keyword>
<keyword id="KW-0067">ATP-binding</keyword>
<keyword id="KW-0966">Cell projection</keyword>
<keyword id="KW-0969">Cilium</keyword>
<keyword id="KW-0963">Cytoplasm</keyword>
<keyword id="KW-0206">Cytoskeleton</keyword>
<keyword id="KW-0436">Ligase</keyword>
<keyword id="KW-0460">Magnesium</keyword>
<keyword id="KW-0479">Metal-binding</keyword>
<keyword id="KW-0493">Microtubule</keyword>
<keyword id="KW-0547">Nucleotide-binding</keyword>
<keyword id="KW-0539">Nucleus</keyword>
<keyword id="KW-1185">Reference proteome</keyword>
<keyword id="KW-0804">Transcription</keyword>
<reference key="1">
    <citation type="journal article" date="2007" name="Mol. Cell">
        <title>A targeted multienzyme mechanism for selective microtubule polyglutamylation.</title>
        <authorList>
            <person name="van Dijk J."/>
            <person name="Rogowski K."/>
            <person name="Miro J."/>
            <person name="Lacroix B."/>
            <person name="Edde B."/>
            <person name="Janke C."/>
        </authorList>
    </citation>
    <scope>NUCLEOTIDE SEQUENCE [MRNA] (ISOFORM 1)</scope>
    <scope>FUNCTION</scope>
    <scope>CATALYTIC ACTIVITY</scope>
    <scope>SUBCELLULAR LOCATION</scope>
    <scope>TISSUE SPECIFICITY</scope>
    <source>
        <strain>C57BL/6J</strain>
        <tissue>Testis</tissue>
    </source>
</reference>
<reference key="2">
    <citation type="journal article" date="2002" name="DNA Res.">
        <title>Prediction of the coding sequences of mouse homologues of KIAA gene: I. The complete nucleotide sequences of 100 mouse KIAA-homologous cDNAs identified by screening of terminal sequences of cDNA clones randomly sampled from size-fractionated libraries.</title>
        <authorList>
            <person name="Okazaki N."/>
            <person name="Kikuno R."/>
            <person name="Ohara R."/>
            <person name="Inamoto S."/>
            <person name="Hara Y."/>
            <person name="Nagase T."/>
            <person name="Ohara O."/>
            <person name="Koga H."/>
        </authorList>
    </citation>
    <scope>NUCLEOTIDE SEQUENCE [LARGE SCALE MRNA] (ISOFORM 1)</scope>
    <source>
        <tissue>Brain</tissue>
    </source>
</reference>
<reference key="3">
    <citation type="journal article" date="2004" name="Genome Res.">
        <title>The status, quality, and expansion of the NIH full-length cDNA project: the Mammalian Gene Collection (MGC).</title>
        <authorList>
            <consortium name="The MGC Project Team"/>
        </authorList>
    </citation>
    <scope>NUCLEOTIDE SEQUENCE [LARGE SCALE MRNA] (ISOFORM 2)</scope>
    <source>
        <tissue>Eye</tissue>
    </source>
</reference>
<reference key="4">
    <citation type="journal article" date="2005" name="Science">
        <title>The transcriptional landscape of the mammalian genome.</title>
        <authorList>
            <person name="Carninci P."/>
            <person name="Kasukawa T."/>
            <person name="Katayama S."/>
            <person name="Gough J."/>
            <person name="Frith M.C."/>
            <person name="Maeda N."/>
            <person name="Oyama R."/>
            <person name="Ravasi T."/>
            <person name="Lenhard B."/>
            <person name="Wells C."/>
            <person name="Kodzius R."/>
            <person name="Shimokawa K."/>
            <person name="Bajic V.B."/>
            <person name="Brenner S.E."/>
            <person name="Batalov S."/>
            <person name="Forrest A.R."/>
            <person name="Zavolan M."/>
            <person name="Davis M.J."/>
            <person name="Wilming L.G."/>
            <person name="Aidinis V."/>
            <person name="Allen J.E."/>
            <person name="Ambesi-Impiombato A."/>
            <person name="Apweiler R."/>
            <person name="Aturaliya R.N."/>
            <person name="Bailey T.L."/>
            <person name="Bansal M."/>
            <person name="Baxter L."/>
            <person name="Beisel K.W."/>
            <person name="Bersano T."/>
            <person name="Bono H."/>
            <person name="Chalk A.M."/>
            <person name="Chiu K.P."/>
            <person name="Choudhary V."/>
            <person name="Christoffels A."/>
            <person name="Clutterbuck D.R."/>
            <person name="Crowe M.L."/>
            <person name="Dalla E."/>
            <person name="Dalrymple B.P."/>
            <person name="de Bono B."/>
            <person name="Della Gatta G."/>
            <person name="di Bernardo D."/>
            <person name="Down T."/>
            <person name="Engstrom P."/>
            <person name="Fagiolini M."/>
            <person name="Faulkner G."/>
            <person name="Fletcher C.F."/>
            <person name="Fukushima T."/>
            <person name="Furuno M."/>
            <person name="Futaki S."/>
            <person name="Gariboldi M."/>
            <person name="Georgii-Hemming P."/>
            <person name="Gingeras T.R."/>
            <person name="Gojobori T."/>
            <person name="Green R.E."/>
            <person name="Gustincich S."/>
            <person name="Harbers M."/>
            <person name="Hayashi Y."/>
            <person name="Hensch T.K."/>
            <person name="Hirokawa N."/>
            <person name="Hill D."/>
            <person name="Huminiecki L."/>
            <person name="Iacono M."/>
            <person name="Ikeo K."/>
            <person name="Iwama A."/>
            <person name="Ishikawa T."/>
            <person name="Jakt M."/>
            <person name="Kanapin A."/>
            <person name="Katoh M."/>
            <person name="Kawasawa Y."/>
            <person name="Kelso J."/>
            <person name="Kitamura H."/>
            <person name="Kitano H."/>
            <person name="Kollias G."/>
            <person name="Krishnan S.P."/>
            <person name="Kruger A."/>
            <person name="Kummerfeld S.K."/>
            <person name="Kurochkin I.V."/>
            <person name="Lareau L.F."/>
            <person name="Lazarevic D."/>
            <person name="Lipovich L."/>
            <person name="Liu J."/>
            <person name="Liuni S."/>
            <person name="McWilliam S."/>
            <person name="Madan Babu M."/>
            <person name="Madera M."/>
            <person name="Marchionni L."/>
            <person name="Matsuda H."/>
            <person name="Matsuzawa S."/>
            <person name="Miki H."/>
            <person name="Mignone F."/>
            <person name="Miyake S."/>
            <person name="Morris K."/>
            <person name="Mottagui-Tabar S."/>
            <person name="Mulder N."/>
            <person name="Nakano N."/>
            <person name="Nakauchi H."/>
            <person name="Ng P."/>
            <person name="Nilsson R."/>
            <person name="Nishiguchi S."/>
            <person name="Nishikawa S."/>
            <person name="Nori F."/>
            <person name="Ohara O."/>
            <person name="Okazaki Y."/>
            <person name="Orlando V."/>
            <person name="Pang K.C."/>
            <person name="Pavan W.J."/>
            <person name="Pavesi G."/>
            <person name="Pesole G."/>
            <person name="Petrovsky N."/>
            <person name="Piazza S."/>
            <person name="Reed J."/>
            <person name="Reid J.F."/>
            <person name="Ring B.Z."/>
            <person name="Ringwald M."/>
            <person name="Rost B."/>
            <person name="Ruan Y."/>
            <person name="Salzberg S.L."/>
            <person name="Sandelin A."/>
            <person name="Schneider C."/>
            <person name="Schoenbach C."/>
            <person name="Sekiguchi K."/>
            <person name="Semple C.A."/>
            <person name="Seno S."/>
            <person name="Sessa L."/>
            <person name="Sheng Y."/>
            <person name="Shibata Y."/>
            <person name="Shimada H."/>
            <person name="Shimada K."/>
            <person name="Silva D."/>
            <person name="Sinclair B."/>
            <person name="Sperling S."/>
            <person name="Stupka E."/>
            <person name="Sugiura K."/>
            <person name="Sultana R."/>
            <person name="Takenaka Y."/>
            <person name="Taki K."/>
            <person name="Tammoja K."/>
            <person name="Tan S.L."/>
            <person name="Tang S."/>
            <person name="Taylor M.S."/>
            <person name="Tegner J."/>
            <person name="Teichmann S.A."/>
            <person name="Ueda H.R."/>
            <person name="van Nimwegen E."/>
            <person name="Verardo R."/>
            <person name="Wei C.L."/>
            <person name="Yagi K."/>
            <person name="Yamanishi H."/>
            <person name="Zabarovsky E."/>
            <person name="Zhu S."/>
            <person name="Zimmer A."/>
            <person name="Hide W."/>
            <person name="Bult C."/>
            <person name="Grimmond S.M."/>
            <person name="Teasdale R.D."/>
            <person name="Liu E.T."/>
            <person name="Brusic V."/>
            <person name="Quackenbush J."/>
            <person name="Wahlestedt C."/>
            <person name="Mattick J.S."/>
            <person name="Hume D.A."/>
            <person name="Kai C."/>
            <person name="Sasaki D."/>
            <person name="Tomaru Y."/>
            <person name="Fukuda S."/>
            <person name="Kanamori-Katayama M."/>
            <person name="Suzuki M."/>
            <person name="Aoki J."/>
            <person name="Arakawa T."/>
            <person name="Iida J."/>
            <person name="Imamura K."/>
            <person name="Itoh M."/>
            <person name="Kato T."/>
            <person name="Kawaji H."/>
            <person name="Kawagashira N."/>
            <person name="Kawashima T."/>
            <person name="Kojima M."/>
            <person name="Kondo S."/>
            <person name="Konno H."/>
            <person name="Nakano K."/>
            <person name="Ninomiya N."/>
            <person name="Nishio T."/>
            <person name="Okada M."/>
            <person name="Plessy C."/>
            <person name="Shibata K."/>
            <person name="Shiraki T."/>
            <person name="Suzuki S."/>
            <person name="Tagami M."/>
            <person name="Waki K."/>
            <person name="Watahiki A."/>
            <person name="Okamura-Oho Y."/>
            <person name="Suzuki H."/>
            <person name="Kawai J."/>
            <person name="Hayashizaki Y."/>
        </authorList>
    </citation>
    <scope>NUCLEOTIDE SEQUENCE [LARGE SCALE MRNA] OF 463-1328 (ISOFORM 1)</scope>
    <source>
        <strain>C57BL/6J</strain>
        <tissue>Testis</tissue>
        <tissue>Tongue</tissue>
    </source>
</reference>
<gene>
    <name evidence="12" type="primary">Ttll5</name>
    <name type="synonym">Kiaa0998</name>
</gene>
<protein>
    <recommendedName>
        <fullName evidence="9">Tubulin polyglutamylase TTLL5</fullName>
        <ecNumber evidence="7">6.3.2.-</ecNumber>
    </recommendedName>
    <alternativeName>
        <fullName>Tubulin--tyrosine ligase-like protein 5</fullName>
    </alternativeName>
</protein>
<organism>
    <name type="scientific">Mus musculus</name>
    <name type="common">Mouse</name>
    <dbReference type="NCBI Taxonomy" id="10090"/>
    <lineage>
        <taxon>Eukaryota</taxon>
        <taxon>Metazoa</taxon>
        <taxon>Chordata</taxon>
        <taxon>Craniata</taxon>
        <taxon>Vertebrata</taxon>
        <taxon>Euteleostomi</taxon>
        <taxon>Mammalia</taxon>
        <taxon>Eutheria</taxon>
        <taxon>Euarchontoglires</taxon>
        <taxon>Glires</taxon>
        <taxon>Rodentia</taxon>
        <taxon>Myomorpha</taxon>
        <taxon>Muroidea</taxon>
        <taxon>Muridae</taxon>
        <taxon>Murinae</taxon>
        <taxon>Mus</taxon>
        <taxon>Mus</taxon>
    </lineage>
</organism>
<comment type="function">
    <text evidence="3 7">Polyglutamylase which modifies tubulin, generating polyglutamate side chains on the gamma-carboxyl group of specific glutamate residues within the C-terminal tail of tubulin (PubMed:17499049). Preferentially mediates ATP-dependent initiation step of the polyglutamylation reaction over the elongation step (PubMed:17499049). Preferentially modifies the alpha-tubulin tail over a beta-tail (PubMed:17499049). Required for CCSAP localization to both polyglutamylated spindle and cilia microtubules (By similarity). Increases the effects of transcriptional coactivator NCOA2/TIF2 in glucocorticoid receptor-mediated repression and induction and in androgen receptor-mediated induction (By similarity).</text>
</comment>
<comment type="catalytic activity">
    <reaction evidence="7">
        <text>L-glutamyl-[protein] + L-glutamate + ATP = gamma-L-glutamyl-L-glutamyl-[protein] + ADP + phosphate + H(+)</text>
        <dbReference type="Rhea" id="RHEA:60144"/>
        <dbReference type="Rhea" id="RHEA-COMP:10208"/>
        <dbReference type="Rhea" id="RHEA-COMP:15517"/>
        <dbReference type="ChEBI" id="CHEBI:15378"/>
        <dbReference type="ChEBI" id="CHEBI:29973"/>
        <dbReference type="ChEBI" id="CHEBI:29985"/>
        <dbReference type="ChEBI" id="CHEBI:30616"/>
        <dbReference type="ChEBI" id="CHEBI:43474"/>
        <dbReference type="ChEBI" id="CHEBI:143622"/>
        <dbReference type="ChEBI" id="CHEBI:456216"/>
    </reaction>
    <physiologicalReaction direction="left-to-right" evidence="11">
        <dbReference type="Rhea" id="RHEA:60145"/>
    </physiologicalReaction>
</comment>
<comment type="catalytic activity">
    <reaction evidence="7">
        <text>(L-glutamyl)(n)-gamma-L-glutamyl-L-glutamyl-[protein] + L-glutamate + ATP = (L-glutamyl)(n+1)-gamma-L-glutamyl-L-glutamyl-[protein] + ADP + phosphate + H(+)</text>
        <dbReference type="Rhea" id="RHEA:60148"/>
        <dbReference type="Rhea" id="RHEA-COMP:15519"/>
        <dbReference type="Rhea" id="RHEA-COMP:15675"/>
        <dbReference type="ChEBI" id="CHEBI:15378"/>
        <dbReference type="ChEBI" id="CHEBI:29985"/>
        <dbReference type="ChEBI" id="CHEBI:30616"/>
        <dbReference type="ChEBI" id="CHEBI:43474"/>
        <dbReference type="ChEBI" id="CHEBI:143623"/>
        <dbReference type="ChEBI" id="CHEBI:456216"/>
    </reaction>
    <physiologicalReaction direction="left-to-right" evidence="11">
        <dbReference type="Rhea" id="RHEA:60149"/>
    </physiologicalReaction>
</comment>
<comment type="cofactor">
    <cofactor evidence="2">
        <name>Mg(2+)</name>
        <dbReference type="ChEBI" id="CHEBI:18420"/>
    </cofactor>
</comment>
<comment type="subunit">
    <text evidence="3">Interacts with the transcriptional coactivators NCOA1/SRC-1 and NCOA2/TIF2.</text>
</comment>
<comment type="subcellular location">
    <subcellularLocation>
        <location evidence="7">Cell projection</location>
        <location evidence="7">Cilium</location>
    </subcellularLocation>
    <subcellularLocation>
        <location evidence="7">Cytoplasm</location>
        <location evidence="7">Cytoskeleton</location>
        <location evidence="7">Cilium basal body</location>
    </subcellularLocation>
    <subcellularLocation>
        <location evidence="3">Nucleus</location>
    </subcellularLocation>
    <subcellularLocation>
        <location evidence="1 3">Cytoplasm</location>
    </subcellularLocation>
    <text evidence="3">In osteosarcoma cells, found in both cytoplasm and nucleus in the absence of steroid but located exclusively in the nucleus in the presence of steroid (By similarity). Localized to the base of the connecting cilium between the basal body and the adjacent daughter centriole of the cilium.</text>
</comment>
<comment type="alternative products">
    <event type="alternative splicing"/>
    <isoform>
        <id>Q8CHB8-1</id>
        <name>1</name>
        <sequence type="displayed"/>
    </isoform>
    <isoform>
        <id>Q8CHB8-2</id>
        <name>2</name>
        <sequence type="described" ref="VSP_041931"/>
    </isoform>
</comment>
<comment type="tissue specificity">
    <text evidence="7">Highly expressed in brain, kidney, liver, spleen and testis (PubMed:17499049). Expressed in heart, lung, muscle and trachea (PubMed:17499049).</text>
</comment>
<comment type="domain">
    <text evidence="3 4">The flexible c-MTBD (cationic microtubule binding domain) region mediates binding to microtubules. It is positively charged and becomes ordered when bound to microtubules: it interacts with a negatively charged patch on tubulin. The presence of positive charges in the c-MTBD region is essential for proper binding.</text>
</comment>
<comment type="domain">
    <text evidence="2">Arg-186 is the main determinant for regioselectivity, which segregates between initiases and elongases in all tubulin--tyrosine ligase family. A glutamine residue at this position is found in elongases TTLL6, TTLL9, TTLL11, TTLL13, TTLL10 and favors glutamate-chain elongation, whereas an arginine residue is found in initiases TTLL2, TTLL4, TTLL5, TTLL3, TTLL8 and favors initiation.</text>
</comment>
<comment type="miscellaneous">
    <molecule>Isoform 2</molecule>
    <text evidence="10">May be produced at very low levels due to a premature stop codon in the mRNA, leading to nonsense-mediated mRNA decay.</text>
</comment>
<comment type="similarity">
    <text evidence="10">Belongs to the tubulin--tyrosine ligase family.</text>
</comment>
<comment type="sequence caution" evidence="10">
    <conflict type="erroneous initiation">
        <sequence resource="EMBL-CDS" id="AAH35276"/>
    </conflict>
    <text>Truncated N-terminus.</text>
</comment>
<comment type="sequence caution" evidence="10">
    <conflict type="erroneous initiation">
        <sequence resource="EMBL-CDS" id="BAC41462"/>
    </conflict>
    <text>Extended N-terminus.</text>
</comment>
<comment type="sequence caution" evidence="10">
    <conflict type="frameshift">
        <sequence resource="EMBL-CDS" id="BAE43213"/>
    </conflict>
</comment>
<accession>Q8CHB8</accession>
<accession>A4Q9E7</accession>
<accession>Q3V468</accession>
<accession>Q8C1F0</accession>
<accession>Q8CFV5</accession>
<accession>Q9CVS6</accession>
<name>TTLL5_MOUSE</name>
<feature type="chain" id="PRO_0000223342" description="Tubulin polyglutamylase TTLL5">
    <location>
        <begin position="1"/>
        <end position="1328"/>
    </location>
</feature>
<feature type="domain" description="TTL" evidence="5">
    <location>
        <begin position="62"/>
        <end position="407"/>
    </location>
</feature>
<feature type="region of interest" description="Disordered" evidence="6">
    <location>
        <begin position="1"/>
        <end position="22"/>
    </location>
</feature>
<feature type="region of interest" description="c-MTBD region" evidence="3">
    <location>
        <begin position="378"/>
        <end position="488"/>
    </location>
</feature>
<feature type="region of interest" description="Disordered" evidence="6">
    <location>
        <begin position="411"/>
        <end position="436"/>
    </location>
</feature>
<feature type="region of interest" description="Disordered" evidence="6">
    <location>
        <begin position="585"/>
        <end position="631"/>
    </location>
</feature>
<feature type="region of interest" description="Disordered" evidence="6">
    <location>
        <begin position="834"/>
        <end position="853"/>
    </location>
</feature>
<feature type="region of interest" description="Disordered" evidence="6">
    <location>
        <begin position="948"/>
        <end position="975"/>
    </location>
</feature>
<feature type="region of interest" description="Disordered" evidence="6">
    <location>
        <begin position="1006"/>
        <end position="1032"/>
    </location>
</feature>
<feature type="region of interest" description="Disordered" evidence="6">
    <location>
        <begin position="1085"/>
        <end position="1129"/>
    </location>
</feature>
<feature type="region of interest" description="Disordered" evidence="6">
    <location>
        <begin position="1212"/>
        <end position="1271"/>
    </location>
</feature>
<feature type="compositionally biased region" description="Polar residues" evidence="6">
    <location>
        <begin position="420"/>
        <end position="432"/>
    </location>
</feature>
<feature type="compositionally biased region" description="Acidic residues" evidence="6">
    <location>
        <begin position="597"/>
        <end position="617"/>
    </location>
</feature>
<feature type="compositionally biased region" description="Low complexity" evidence="6">
    <location>
        <begin position="838"/>
        <end position="847"/>
    </location>
</feature>
<feature type="compositionally biased region" description="Polar residues" evidence="6">
    <location>
        <begin position="1116"/>
        <end position="1128"/>
    </location>
</feature>
<feature type="compositionally biased region" description="Polar residues" evidence="6">
    <location>
        <begin position="1214"/>
        <end position="1227"/>
    </location>
</feature>
<feature type="compositionally biased region" description="Polar residues" evidence="6">
    <location>
        <begin position="1234"/>
        <end position="1248"/>
    </location>
</feature>
<feature type="compositionally biased region" description="Polar residues" evidence="6">
    <location>
        <begin position="1257"/>
        <end position="1271"/>
    </location>
</feature>
<feature type="binding site" evidence="2">
    <location>
        <position position="180"/>
    </location>
    <ligand>
        <name>ATP</name>
        <dbReference type="ChEBI" id="CHEBI:30616"/>
    </ligand>
</feature>
<feature type="binding site" evidence="2">
    <location>
        <begin position="186"/>
        <end position="187"/>
    </location>
    <ligand>
        <name>ATP</name>
        <dbReference type="ChEBI" id="CHEBI:30616"/>
    </ligand>
</feature>
<feature type="binding site" evidence="2">
    <location>
        <position position="186"/>
    </location>
    <ligand>
        <name>a protein</name>
        <dbReference type="ChEBI" id="CHEBI:16541"/>
    </ligand>
    <ligandPart>
        <name>L-glutamate residue</name>
        <dbReference type="ChEBI" id="CHEBI:29973"/>
        <note>L-glutamate acceptor residue in protein target</note>
    </ligandPart>
</feature>
<feature type="binding site" evidence="2">
    <location>
        <begin position="208"/>
        <end position="211"/>
    </location>
    <ligand>
        <name>ATP</name>
        <dbReference type="ChEBI" id="CHEBI:30616"/>
    </ligand>
</feature>
<feature type="binding site" evidence="2">
    <location>
        <begin position="221"/>
        <end position="223"/>
    </location>
    <ligand>
        <name>ATP</name>
        <dbReference type="ChEBI" id="CHEBI:30616"/>
    </ligand>
</feature>
<feature type="binding site" evidence="2">
    <location>
        <position position="247"/>
    </location>
    <ligand>
        <name>L-glutamate</name>
        <dbReference type="ChEBI" id="CHEBI:29985"/>
    </ligand>
</feature>
<feature type="binding site" evidence="2">
    <location>
        <begin position="268"/>
        <end position="269"/>
    </location>
    <ligand>
        <name>ATP</name>
        <dbReference type="ChEBI" id="CHEBI:30616"/>
    </ligand>
</feature>
<feature type="binding site" evidence="2">
    <location>
        <position position="270"/>
    </location>
    <ligand>
        <name>L-glutamate</name>
        <dbReference type="ChEBI" id="CHEBI:29985"/>
    </ligand>
</feature>
<feature type="binding site" evidence="2">
    <location>
        <position position="271"/>
    </location>
    <ligand>
        <name>L-glutamate</name>
        <dbReference type="ChEBI" id="CHEBI:29985"/>
    </ligand>
</feature>
<feature type="binding site" evidence="2">
    <location>
        <position position="293"/>
    </location>
    <ligand>
        <name>L-glutamate</name>
        <dbReference type="ChEBI" id="CHEBI:29985"/>
    </ligand>
</feature>
<feature type="binding site" evidence="2">
    <location>
        <position position="353"/>
    </location>
    <ligand>
        <name>Mg(2+)</name>
        <dbReference type="ChEBI" id="CHEBI:18420"/>
        <label>1</label>
    </ligand>
</feature>
<feature type="binding site" evidence="2">
    <location>
        <position position="366"/>
    </location>
    <ligand>
        <name>Mg(2+)</name>
        <dbReference type="ChEBI" id="CHEBI:18420"/>
        <label>1</label>
    </ligand>
</feature>
<feature type="binding site" evidence="2">
    <location>
        <position position="366"/>
    </location>
    <ligand>
        <name>Mg(2+)</name>
        <dbReference type="ChEBI" id="CHEBI:18420"/>
        <label>2</label>
    </ligand>
</feature>
<feature type="binding site" evidence="2">
    <location>
        <position position="368"/>
    </location>
    <ligand>
        <name>Mg(2+)</name>
        <dbReference type="ChEBI" id="CHEBI:18420"/>
        <label>2</label>
    </ligand>
</feature>
<feature type="binding site" evidence="2">
    <location>
        <position position="384"/>
    </location>
    <ligand>
        <name>L-glutamate</name>
        <dbReference type="ChEBI" id="CHEBI:29985"/>
    </ligand>
</feature>
<feature type="site" description="Essential for specifying initiation versus elongation step of the polyglutamylase activity" evidence="2">
    <location>
        <position position="186"/>
    </location>
</feature>
<feature type="splice variant" id="VSP_041931" description="In isoform 2." evidence="8">
    <location>
        <begin position="564"/>
        <end position="1328"/>
    </location>
</feature>
<feature type="sequence conflict" description="In Ref. 4; BAE43213." evidence="10" ref="4">
    <original>IE</original>
    <variation>NQ</variation>
    <location>
        <begin position="663"/>
        <end position="664"/>
    </location>
</feature>
<feature type="sequence conflict" description="In Ref. 2; BAC41462." evidence="10" ref="2">
    <original>A</original>
    <variation>G</variation>
    <location>
        <position position="665"/>
    </location>
</feature>
<feature type="sequence conflict" description="In Ref. 4; BAE43213." evidence="10" ref="4">
    <original>I</original>
    <variation>M</variation>
    <location>
        <position position="677"/>
    </location>
</feature>
<feature type="sequence conflict" description="In Ref. 4; BAE43213." evidence="10" ref="4">
    <original>E</original>
    <variation>D</variation>
    <location>
        <position position="803"/>
    </location>
</feature>
<feature type="sequence conflict" description="In Ref. 4; BAE43213." evidence="10" ref="4">
    <original>K</original>
    <variation>N</variation>
    <location>
        <position position="1222"/>
    </location>
</feature>
<feature type="sequence conflict" description="In Ref. 4; BAB24715." evidence="10" ref="4">
    <original>R</original>
    <variation>K</variation>
    <location>
        <position position="1252"/>
    </location>
</feature>
<feature type="sequence conflict" description="In Ref. 4; BAB24715." evidence="10" ref="4">
    <original>E</original>
    <variation>K</variation>
    <location>
        <position position="1266"/>
    </location>
</feature>
<dbReference type="EC" id="6.3.2.-" evidence="7"/>
<dbReference type="EMBL" id="AM690748">
    <property type="protein sequence ID" value="CAM84325.1"/>
    <property type="molecule type" value="mRNA"/>
</dbReference>
<dbReference type="EMBL" id="AB093278">
    <property type="protein sequence ID" value="BAC41462.1"/>
    <property type="status" value="ALT_INIT"/>
    <property type="molecule type" value="mRNA"/>
</dbReference>
<dbReference type="EMBL" id="BC035276">
    <property type="protein sequence ID" value="AAH35276.1"/>
    <property type="status" value="ALT_INIT"/>
    <property type="molecule type" value="mRNA"/>
</dbReference>
<dbReference type="EMBL" id="AK006726">
    <property type="protein sequence ID" value="BAB24715.1"/>
    <property type="molecule type" value="mRNA"/>
</dbReference>
<dbReference type="EMBL" id="AK009255">
    <property type="protein sequence ID" value="BAE43213.1"/>
    <property type="status" value="ALT_FRAME"/>
    <property type="molecule type" value="mRNA"/>
</dbReference>
<dbReference type="EMBL" id="AK028083">
    <property type="protein sequence ID" value="BAC25741.1"/>
    <property type="molecule type" value="mRNA"/>
</dbReference>
<dbReference type="CCDS" id="CCDS36499.2">
    <molecule id="Q8CHB8-1"/>
</dbReference>
<dbReference type="RefSeq" id="NP_001074892.2">
    <molecule id="Q8CHB8-1"/>
    <property type="nucleotide sequence ID" value="NM_001081423.3"/>
</dbReference>
<dbReference type="RefSeq" id="NP_001334324.1">
    <property type="nucleotide sequence ID" value="NM_001347395.1"/>
</dbReference>
<dbReference type="RefSeq" id="XP_017170604.1">
    <property type="nucleotide sequence ID" value="XM_017315115.1"/>
</dbReference>
<dbReference type="RefSeq" id="XP_030102633.1">
    <molecule id="Q8CHB8-1"/>
    <property type="nucleotide sequence ID" value="XM_030246773.2"/>
</dbReference>
<dbReference type="RefSeq" id="XP_030102634.1">
    <molecule id="Q8CHB8-1"/>
    <property type="nucleotide sequence ID" value="XM_030246774.2"/>
</dbReference>
<dbReference type="RefSeq" id="XP_036013390.1">
    <molecule id="Q8CHB8-1"/>
    <property type="nucleotide sequence ID" value="XM_036157497.1"/>
</dbReference>
<dbReference type="SMR" id="Q8CHB8"/>
<dbReference type="FunCoup" id="Q8CHB8">
    <property type="interactions" value="1919"/>
</dbReference>
<dbReference type="STRING" id="10090.ENSMUSP00000048809"/>
<dbReference type="GlyGen" id="Q8CHB8">
    <property type="glycosylation" value="2 sites, 1 N-linked glycan (1 site)"/>
</dbReference>
<dbReference type="iPTMnet" id="Q8CHB8"/>
<dbReference type="PhosphoSitePlus" id="Q8CHB8"/>
<dbReference type="PaxDb" id="10090-ENSMUSP00000048809"/>
<dbReference type="ProteomicsDB" id="297753">
    <molecule id="Q8CHB8-1"/>
</dbReference>
<dbReference type="ProteomicsDB" id="297754">
    <molecule id="Q8CHB8-2"/>
</dbReference>
<dbReference type="DNASU" id="320244"/>
<dbReference type="Ensembl" id="ENSMUST00000040179.14">
    <molecule id="Q8CHB8-1"/>
    <property type="protein sequence ID" value="ENSMUSP00000048809.8"/>
    <property type="gene ID" value="ENSMUSG00000012609.20"/>
</dbReference>
<dbReference type="Ensembl" id="ENSMUST00000155448.9">
    <molecule id="Q8CHB8-2"/>
    <property type="protein sequence ID" value="ENSMUSP00000134971.2"/>
    <property type="gene ID" value="ENSMUSG00000012609.20"/>
</dbReference>
<dbReference type="GeneID" id="320244"/>
<dbReference type="KEGG" id="mmu:320244"/>
<dbReference type="UCSC" id="uc007ohj.2">
    <molecule id="Q8CHB8-1"/>
    <property type="organism name" value="mouse"/>
</dbReference>
<dbReference type="AGR" id="MGI:2443657"/>
<dbReference type="CTD" id="23093"/>
<dbReference type="MGI" id="MGI:2443657">
    <property type="gene designation" value="Ttll5"/>
</dbReference>
<dbReference type="VEuPathDB" id="HostDB:ENSMUSG00000012609"/>
<dbReference type="eggNOG" id="KOG2156">
    <property type="taxonomic scope" value="Eukaryota"/>
</dbReference>
<dbReference type="eggNOG" id="KOG2157">
    <property type="taxonomic scope" value="Eukaryota"/>
</dbReference>
<dbReference type="GeneTree" id="ENSGT00940000162910"/>
<dbReference type="InParanoid" id="Q8CHB8"/>
<dbReference type="OMA" id="GEFIQCY"/>
<dbReference type="OrthoDB" id="2016263at2759"/>
<dbReference type="PhylomeDB" id="Q8CHB8"/>
<dbReference type="TreeFam" id="TF313087"/>
<dbReference type="BRENDA" id="6.3.2.B3">
    <property type="organism ID" value="3474"/>
</dbReference>
<dbReference type="Reactome" id="R-MMU-8955332">
    <property type="pathway name" value="Carboxyterminal post-translational modifications of tubulin"/>
</dbReference>
<dbReference type="BioGRID-ORCS" id="320244">
    <property type="hits" value="6 hits in 80 CRISPR screens"/>
</dbReference>
<dbReference type="ChiTaRS" id="Ttll5">
    <property type="organism name" value="mouse"/>
</dbReference>
<dbReference type="PRO" id="PR:Q8CHB8"/>
<dbReference type="Proteomes" id="UP000000589">
    <property type="component" value="Chromosome 12"/>
</dbReference>
<dbReference type="RNAct" id="Q8CHB8">
    <property type="molecule type" value="protein"/>
</dbReference>
<dbReference type="Bgee" id="ENSMUSG00000012609">
    <property type="expression patterns" value="Expressed in spermatocyte and 207 other cell types or tissues"/>
</dbReference>
<dbReference type="ExpressionAtlas" id="Q8CHB8">
    <property type="expression patterns" value="baseline and differential"/>
</dbReference>
<dbReference type="GO" id="GO:0097731">
    <property type="term" value="C:9+0 non-motile cilium"/>
    <property type="evidence" value="ECO:0000314"/>
    <property type="project" value="MGI"/>
</dbReference>
<dbReference type="GO" id="GO:0036064">
    <property type="term" value="C:ciliary basal body"/>
    <property type="evidence" value="ECO:0000314"/>
    <property type="project" value="MGI"/>
</dbReference>
<dbReference type="GO" id="GO:0005929">
    <property type="term" value="C:cilium"/>
    <property type="evidence" value="ECO:0000314"/>
    <property type="project" value="MGI"/>
</dbReference>
<dbReference type="GO" id="GO:0005737">
    <property type="term" value="C:cytoplasm"/>
    <property type="evidence" value="ECO:0007669"/>
    <property type="project" value="UniProtKB-SubCell"/>
</dbReference>
<dbReference type="GO" id="GO:0005874">
    <property type="term" value="C:microtubule"/>
    <property type="evidence" value="ECO:0007669"/>
    <property type="project" value="UniProtKB-KW"/>
</dbReference>
<dbReference type="GO" id="GO:0005634">
    <property type="term" value="C:nucleus"/>
    <property type="evidence" value="ECO:0007669"/>
    <property type="project" value="UniProtKB-SubCell"/>
</dbReference>
<dbReference type="GO" id="GO:0005524">
    <property type="term" value="F:ATP binding"/>
    <property type="evidence" value="ECO:0007669"/>
    <property type="project" value="UniProtKB-KW"/>
</dbReference>
<dbReference type="GO" id="GO:0046872">
    <property type="term" value="F:metal ion binding"/>
    <property type="evidence" value="ECO:0007669"/>
    <property type="project" value="UniProtKB-KW"/>
</dbReference>
<dbReference type="GO" id="GO:0106438">
    <property type="term" value="F:protein-glutamic acid ligase activity, elongating"/>
    <property type="evidence" value="ECO:0007669"/>
    <property type="project" value="RHEA"/>
</dbReference>
<dbReference type="GO" id="GO:0106437">
    <property type="term" value="F:protein-glutamic acid ligase activity, initiating"/>
    <property type="evidence" value="ECO:0007669"/>
    <property type="project" value="RHEA"/>
</dbReference>
<dbReference type="GO" id="GO:0070740">
    <property type="term" value="F:tubulin-glutamic acid ligase activity"/>
    <property type="evidence" value="ECO:0000314"/>
    <property type="project" value="UniProtKB"/>
</dbReference>
<dbReference type="GO" id="GO:0009566">
    <property type="term" value="P:fertilization"/>
    <property type="evidence" value="ECO:0000315"/>
    <property type="project" value="MGI"/>
</dbReference>
<dbReference type="GO" id="GO:0030317">
    <property type="term" value="P:flagellated sperm motility"/>
    <property type="evidence" value="ECO:0000315"/>
    <property type="project" value="MGI"/>
</dbReference>
<dbReference type="GO" id="GO:0036211">
    <property type="term" value="P:protein modification process"/>
    <property type="evidence" value="ECO:0007669"/>
    <property type="project" value="InterPro"/>
</dbReference>
<dbReference type="GO" id="GO:0060041">
    <property type="term" value="P:retina development in camera-type eye"/>
    <property type="evidence" value="ECO:0000266"/>
    <property type="project" value="MGI"/>
</dbReference>
<dbReference type="GO" id="GO:0007288">
    <property type="term" value="P:sperm axoneme assembly"/>
    <property type="evidence" value="ECO:0000315"/>
    <property type="project" value="MGI"/>
</dbReference>
<dbReference type="GO" id="GO:0007283">
    <property type="term" value="P:spermatogenesis"/>
    <property type="evidence" value="ECO:0000315"/>
    <property type="project" value="MGI"/>
</dbReference>
<dbReference type="FunFam" id="3.30.470.20:FF:000009">
    <property type="entry name" value="tubulin polyglutamylase TTLL5 isoform X1"/>
    <property type="match status" value="1"/>
</dbReference>
<dbReference type="Gene3D" id="3.30.470.20">
    <property type="entry name" value="ATP-grasp fold, B domain"/>
    <property type="match status" value="1"/>
</dbReference>
<dbReference type="InterPro" id="IPR004344">
    <property type="entry name" value="TTL/TTLL_fam"/>
</dbReference>
<dbReference type="PANTHER" id="PTHR12241">
    <property type="entry name" value="TUBULIN POLYGLUTAMYLASE"/>
    <property type="match status" value="1"/>
</dbReference>
<dbReference type="PANTHER" id="PTHR12241:SF145">
    <property type="entry name" value="TUBULIN POLYGLUTAMYLASE TTLL5"/>
    <property type="match status" value="1"/>
</dbReference>
<dbReference type="Pfam" id="PF03133">
    <property type="entry name" value="TTL"/>
    <property type="match status" value="1"/>
</dbReference>
<dbReference type="SUPFAM" id="SSF56059">
    <property type="entry name" value="Glutathione synthetase ATP-binding domain-like"/>
    <property type="match status" value="1"/>
</dbReference>
<dbReference type="PROSITE" id="PS51221">
    <property type="entry name" value="TTL"/>
    <property type="match status" value="1"/>
</dbReference>